<comment type="function">
    <text>Core component of nucleosome. Nucleosomes wrap and compact DNA into chromatin, limiting DNA accessibility to the cellular machineries which require DNA as a template. Histones thereby play a central role in transcription regulation, DNA repair, DNA replication and chromosomal stability. DNA accessibility is regulated via a complex set of post-translational modifications of histones, also called histone code, and nucleosome remodeling.</text>
</comment>
<comment type="subunit">
    <text evidence="6 7">The nucleosome is a histone octamer containing two molecules each of H2A, H2B, H3 and H4 assembled in one H3-H4 heterotetramer and two H2A-H2B heterodimers. The octamer wraps approximately 147 bp of DNA.</text>
</comment>
<comment type="subcellular location">
    <subcellularLocation>
        <location>Nucleus</location>
    </subcellularLocation>
    <subcellularLocation>
        <location>Chromosome</location>
    </subcellularLocation>
</comment>
<comment type="PTM">
    <text evidence="3">Acetylation is generally linked to gene activation. Acetylation on Lys-19 (H3K18ac) and Lys-24 (H3K24ac) favors methylation at Arg-18 (H3R17me). Acetylation at Lys-123 (H3K122ac) by EP300/p300 plays a central role in chromatin structure: localizes at the surface of the histone octamer and stimulates transcription, possibly by promoting nucleosome instability (By similarity).</text>
</comment>
<comment type="PTM">
    <text evidence="3">Asymmetric dimethylation at Arg-18 (H3R17me2a) is linked to gene activation. Asymmetric dimethylation at Arg-3 (H3R2me2a) by PRMT6 is linked to gene repression and is mutually exclusive with H3 Lys-5 methylation (H3K4me2 and H3K4me3). H3R2me2a is present at the 3' of genes regardless of their transcription state and is enriched on inactive promoters, while it is absent on active promoters (By similarity).</text>
</comment>
<comment type="PTM">
    <text evidence="3">Methylation at Lys-5 (H3K4me) and Lys-80 (H3K79me) are linked to gene activation. Methylation at Lys-5 (H3K4me) facilitates subsequent acetylation of H3 and H4. Methylation at Lys-80 (H3K79me) is associated with DNA double-strand break (DSB) responses and is a specific target for TP53BP1. Methylation at Lys-10 (H3K9me) and Lys-28 (H3K27me) are linked to gene repression. Methylation at Lys-10 (H3K9me) is a specific target for HP1 proteins (CBX1, CBX3 and CBX5) and prevents subsequent phosphorylation at Ser-11 (H3S10ph) and acetylation of H3 and H4. Methylation at Lys-5 (H3K4me) and Lys-80 (H3K79me) require preliminary monoubiquitination of H2B at 'Lys-120' (By similarity).</text>
</comment>
<comment type="PTM">
    <text evidence="3">Phosphorylated at Thr-4 (H3T3ph) by HASPIN during prophase and dephosphorylated during anaphase. Phosphorylation at Ser-11 (H3S10ph) by aurkb is crucial for chromosome condensation and cell-cycle progression during mitosis and meiosis. In addition phosphorylation at Ser-11 (H3S10ph) by rps6ka4 and rps6ka5 is important during interphase because it enables the transcription of genes following external stimulation, like mitogens, stress, growth factors or UV irradiation and result in the activation of genes, such as c-fos and c-jun. Phosphorylation at Ser-11 (H3S10ph), which is linked to gene activation, prevents methylation at Lys-10 (H3K9me) but facilitates acetylation of H3 and H4. Phosphorylation at Ser-11 (H3S10ph) by aurkb mediates the dissociation of HP1 proteins (cbx1, cbx3 and cbx5) from heterochromatin. Phosphorylation at Ser-11 (H3S10ph) is also an essential regulatory mechanism for neoplastic cell transformation. Phosphorylation at Thr-7 (H3T6ph) by prkcb is a specific tag for epigenetic transcriptional activation that prevents demethylation of Lys-5 (H3K4me) by lsd1/kdm1a. At centromeres, specifically phosphorylated at Thr-12 (H3T11ph) from prophase to early anaphase, by DAPK3 and PKN1. Phosphorylation at Thr-12 (H3T11ph) by PKN1 or isoform M2 of PKM (PKM2) is a specific tag for epigenetic transcriptional activation that promotes demethylation of Lys-10 (H3K9me) by kdm4c/jmjd2c. Phosphorylation at Tyr-42 (H3Y41ph) by jak2 promotes exclusion of cbx5 (HP1 alpha) from chromatin (By similarity).</text>
</comment>
<comment type="PTM">
    <text evidence="3">Lysine deamination at Lys-5 (H3K4all) to form allysine only takes place on H3K4me3 and results in gene repression.</text>
</comment>
<comment type="PTM">
    <text evidence="2">Butyrylation of histones marks active promoters and competes with histone acetylation. It is present during late spermatogenesis.</text>
</comment>
<comment type="PTM">
    <text evidence="1">Succinylation at Lys-80 (H3K79succ) by KAT2A takes place with a maximum frequency around the transcription start sites of genes. It gives a specific tag for epigenetic transcription activation. Desuccinylation at Lys-123 (H3K122succ) by SIRT7 in response to DNA damage promotes chromatin condensation and double-strand breaks (DSBs) repair.</text>
</comment>
<comment type="PTM">
    <text evidence="1">Serine ADP-ribosylation constitutes the primary form of ADP-ribosylation of proteins in response to DNA damage. Serine ADP-ribosylation at Ser-11 (H3S10ADPr) is mutually exclusive with phosphorylation at Ser-11 (H3S10ph) and impairs acetylation at Lys-10 (H3K9ac).</text>
</comment>
<comment type="similarity">
    <text evidence="8">Belongs to the histone H3 family.</text>
</comment>
<organism>
    <name type="scientific">Xenopus laevis</name>
    <name type="common">African clawed frog</name>
    <dbReference type="NCBI Taxonomy" id="8355"/>
    <lineage>
        <taxon>Eukaryota</taxon>
        <taxon>Metazoa</taxon>
        <taxon>Chordata</taxon>
        <taxon>Craniata</taxon>
        <taxon>Vertebrata</taxon>
        <taxon>Euteleostomi</taxon>
        <taxon>Amphibia</taxon>
        <taxon>Batrachia</taxon>
        <taxon>Anura</taxon>
        <taxon>Pipoidea</taxon>
        <taxon>Pipidae</taxon>
        <taxon>Xenopodinae</taxon>
        <taxon>Xenopus</taxon>
        <taxon>Xenopus</taxon>
    </lineage>
</organism>
<keyword id="KW-0002">3D-structure</keyword>
<keyword id="KW-0007">Acetylation</keyword>
<keyword id="KW-0013">ADP-ribosylation</keyword>
<keyword id="KW-0158">Chromosome</keyword>
<keyword id="KW-0238">DNA-binding</keyword>
<keyword id="KW-0379">Hydroxylation</keyword>
<keyword id="KW-0488">Methylation</keyword>
<keyword id="KW-0544">Nucleosome core</keyword>
<keyword id="KW-0539">Nucleus</keyword>
<keyword id="KW-0597">Phosphoprotein</keyword>
<keyword id="KW-1185">Reference proteome</keyword>
<keyword id="KW-0832">Ubl conjugation</keyword>
<gene>
    <name type="primary">h3-5</name>
    <name type="synonym">h3f3c</name>
</gene>
<feature type="initiator methionine" description="Removed" evidence="8">
    <location>
        <position position="1"/>
    </location>
</feature>
<feature type="chain" id="PRO_0000221266" description="Histone H3.3C">
    <location>
        <begin position="2"/>
        <end position="136"/>
    </location>
</feature>
<feature type="region of interest" description="Disordered" evidence="5">
    <location>
        <begin position="1"/>
        <end position="42"/>
    </location>
</feature>
<feature type="modified residue" description="Asymmetric dimethylarginine; by PRMT6" evidence="3">
    <location>
        <position position="3"/>
    </location>
</feature>
<feature type="modified residue" description="Phosphothreonine; by HASPIN" evidence="3">
    <location>
        <position position="4"/>
    </location>
</feature>
<feature type="modified residue" description="Allysine; alternate" evidence="3">
    <location>
        <position position="5"/>
    </location>
</feature>
<feature type="modified residue" description="N6,N6,N6-trimethyllysine; alternate" evidence="3">
    <location>
        <position position="5"/>
    </location>
</feature>
<feature type="modified residue" description="N6,N6-dimethyllysine; alternate" evidence="3">
    <location>
        <position position="5"/>
    </location>
</feature>
<feature type="modified residue" description="N6-(2-hydroxyisobutyryl)lysine; alternate" evidence="1">
    <location>
        <position position="5"/>
    </location>
</feature>
<feature type="modified residue" description="N6-acetyllysine; alternate" evidence="3">
    <location>
        <position position="5"/>
    </location>
</feature>
<feature type="modified residue" description="N6-methyllysine; alternate" evidence="3">
    <location>
        <position position="5"/>
    </location>
</feature>
<feature type="modified residue" description="5-glutamyl dopamine; alternate" evidence="1">
    <location>
        <position position="6"/>
    </location>
</feature>
<feature type="modified residue" description="5-glutamyl serotonin; alternate" evidence="1">
    <location>
        <position position="6"/>
    </location>
</feature>
<feature type="modified residue" description="Phosphothreonine; by PKC" evidence="3">
    <location>
        <position position="7"/>
    </location>
</feature>
<feature type="modified residue" description="N6-(2-hydroxyisobutyryl)lysine; alternate" evidence="1">
    <location>
        <position position="10"/>
    </location>
</feature>
<feature type="modified residue" description="N6-lactoyllysine; alternate" evidence="1">
    <location>
        <position position="10"/>
    </location>
</feature>
<feature type="modified residue" description="N6-methylated lysine" evidence="3">
    <location>
        <position position="10"/>
    </location>
</feature>
<feature type="modified residue" description="ADP-ribosylserine; alternate" evidence="1">
    <location>
        <position position="11"/>
    </location>
</feature>
<feature type="modified residue" description="Phosphoserine; alternate; by AURKB, AURKC, RPS6KA3, RPS6KA4 and RPS6KA5" evidence="3">
    <location>
        <position position="11"/>
    </location>
</feature>
<feature type="modified residue" description="Phosphothreonine; by PKC" evidence="3">
    <location>
        <position position="12"/>
    </location>
</feature>
<feature type="modified residue" description="N6-(2-hydroxyisobutyryl)lysine; alternate" evidence="1">
    <location>
        <position position="15"/>
    </location>
</feature>
<feature type="modified residue" description="N6-acetyllysine" evidence="3">
    <location>
        <position position="15"/>
    </location>
</feature>
<feature type="modified residue" description="N6-glutaryllysine; alternate" evidence="3">
    <location>
        <position position="15"/>
    </location>
</feature>
<feature type="modified residue" description="N6-lactoyllysine; alternate" evidence="2">
    <location>
        <position position="15"/>
    </location>
</feature>
<feature type="modified residue" description="Asymmetric dimethylarginine" evidence="3">
    <location>
        <position position="18"/>
    </location>
</feature>
<feature type="modified residue" description="N6-(2-hydroxyisobutyryl)lysine; alternate" evidence="1">
    <location>
        <position position="19"/>
    </location>
</feature>
<feature type="modified residue" description="N6-acetyllysine; alternate" evidence="3">
    <location>
        <position position="19"/>
    </location>
</feature>
<feature type="modified residue" description="N6-butyryllysine; alternate" evidence="2">
    <location>
        <position position="19"/>
    </location>
</feature>
<feature type="modified residue" description="N6-glutaryllysine; alternate" evidence="3">
    <location>
        <position position="19"/>
    </location>
</feature>
<feature type="modified residue" description="N6-lactoyllysine; alternate" evidence="1">
    <location>
        <position position="19"/>
    </location>
</feature>
<feature type="modified residue" description="N6-methylated lysine; alternate" evidence="3">
    <location>
        <position position="19"/>
    </location>
</feature>
<feature type="modified residue" description="N6-(2-hydroxyisobutyryl)lysine; alternate" evidence="1">
    <location>
        <position position="24"/>
    </location>
</feature>
<feature type="modified residue" description="N6-acetyllysine" evidence="3">
    <location>
        <position position="24"/>
    </location>
</feature>
<feature type="modified residue" description="N6-butyryllysine; alternate" evidence="2">
    <location>
        <position position="24"/>
    </location>
</feature>
<feature type="modified residue" description="N6-glutaryllysine; alternate" evidence="3">
    <location>
        <position position="24"/>
    </location>
</feature>
<feature type="modified residue" description="N6-lactoyllysine; alternate" evidence="1">
    <location>
        <position position="24"/>
    </location>
</feature>
<feature type="modified residue" description="N6-(2-hydroxyisobutyryl)lysine; alternate" evidence="1">
    <location>
        <position position="28"/>
    </location>
</feature>
<feature type="modified residue" description="N6-acetyllysine; alternate" evidence="3">
    <location>
        <position position="28"/>
    </location>
</feature>
<feature type="modified residue" description="N6-glutaryllysine; alternate" evidence="3">
    <location>
        <position position="28"/>
    </location>
</feature>
<feature type="modified residue" description="N6-lactoyllysine; alternate" evidence="1">
    <location>
        <position position="28"/>
    </location>
</feature>
<feature type="modified residue" description="N6-methylated lysine; alternate" evidence="3">
    <location>
        <position position="28"/>
    </location>
</feature>
<feature type="modified residue" description="N6-(2-hydroxyisobutyryl)lysine; alternate" evidence="1">
    <location>
        <position position="37"/>
    </location>
</feature>
<feature type="modified residue" description="N6-acetyllysine; alternate" evidence="3">
    <location>
        <position position="37"/>
    </location>
</feature>
<feature type="modified residue" description="N6-methylated lysine; alternate" evidence="3">
    <location>
        <position position="37"/>
    </location>
</feature>
<feature type="modified residue" description="Phosphotyrosine" evidence="3">
    <location>
        <position position="42"/>
    </location>
</feature>
<feature type="modified residue" description="N6-(2-hydroxyisobutyryl)lysine; alternate" evidence="1">
    <location>
        <position position="57"/>
    </location>
</feature>
<feature type="modified residue" description="N6-glutaryllysine; alternate" evidence="3">
    <location>
        <position position="57"/>
    </location>
</feature>
<feature type="modified residue" description="N6-lactoyllysine; alternate" evidence="2">
    <location>
        <position position="57"/>
    </location>
</feature>
<feature type="modified residue" description="N6-succinyllysine; alternate" evidence="4">
    <location>
        <position position="57"/>
    </location>
</feature>
<feature type="modified residue" description="Phosphoserine" evidence="3">
    <location>
        <position position="58"/>
    </location>
</feature>
<feature type="modified residue" description="N6-(2-hydroxyisobutyryl)lysine; alternate" evidence="1">
    <location>
        <position position="65"/>
    </location>
</feature>
<feature type="modified residue" description="N6-methylated lysine" evidence="3">
    <location>
        <position position="65"/>
    </location>
</feature>
<feature type="modified residue" description="N6-(2-hydroxyisobutyryl)lysine; alternate" evidence="1">
    <location>
        <position position="80"/>
    </location>
</feature>
<feature type="modified residue" description="N6-glutaryllysine; alternate" evidence="3">
    <location>
        <position position="80"/>
    </location>
</feature>
<feature type="modified residue" description="N6-lactoyllysine; alternate" evidence="1">
    <location>
        <position position="80"/>
    </location>
</feature>
<feature type="modified residue" description="N6-methylated lysine" evidence="3">
    <location>
        <position position="80"/>
    </location>
</feature>
<feature type="modified residue" description="N6-succinyllysine; alternate" evidence="4">
    <location>
        <position position="80"/>
    </location>
</feature>
<feature type="modified residue" description="Phosphothreonine" evidence="3">
    <location>
        <position position="81"/>
    </location>
</feature>
<feature type="modified residue" description="N6-acetyllysine; alternate" evidence="3">
    <location>
        <position position="116"/>
    </location>
</feature>
<feature type="modified residue" description="N6-glutaryllysine; alternate" evidence="3">
    <location>
        <position position="116"/>
    </location>
</feature>
<feature type="modified residue" description="N6-(2-hydroxyisobutyryl)lysine; alternate" evidence="1">
    <location>
        <position position="123"/>
    </location>
</feature>
<feature type="modified residue" description="N6-acetyllysine; alternate" evidence="3">
    <location>
        <position position="123"/>
    </location>
</feature>
<feature type="modified residue" description="N6-glutaryllysine; alternate" evidence="3">
    <location>
        <position position="123"/>
    </location>
</feature>
<feature type="modified residue" description="N6-methylated lysine; alternate" evidence="3">
    <location>
        <position position="123"/>
    </location>
</feature>
<feature type="modified residue" description="N6-succinyllysine; alternate" evidence="3">
    <location>
        <position position="123"/>
    </location>
</feature>
<feature type="strand" evidence="9">
    <location>
        <begin position="23"/>
        <end position="25"/>
    </location>
</feature>
<feature type="helix" evidence="10">
    <location>
        <begin position="46"/>
        <end position="55"/>
    </location>
</feature>
<feature type="helix" evidence="10">
    <location>
        <begin position="65"/>
        <end position="77"/>
    </location>
</feature>
<feature type="strand" evidence="11">
    <location>
        <begin position="80"/>
        <end position="82"/>
    </location>
</feature>
<feature type="helix" evidence="10">
    <location>
        <begin position="87"/>
        <end position="114"/>
    </location>
</feature>
<feature type="strand" evidence="10">
    <location>
        <begin position="118"/>
        <end position="120"/>
    </location>
</feature>
<feature type="helix" evidence="10">
    <location>
        <begin position="122"/>
        <end position="132"/>
    </location>
</feature>
<reference key="1">
    <citation type="journal article" date="1981" name="FEBS Lett.">
        <title>Primary structure of the histone H3 and H4 genes and their flanking sequences in a minor histone gene cluster of Xenopus laevis.</title>
        <authorList>
            <person name="Moorman A.F.M."/>
            <person name="de Boer P.A.J."/>
            <person name="de Laaf R.T.M."/>
            <person name="van Dongen W.M.A.M."/>
            <person name="Destree O.H.J."/>
        </authorList>
    </citation>
    <scope>NUCLEOTIDE SEQUENCE [GENOMIC DNA] (GENE CLUSTER X1H1)</scope>
</reference>
<reference key="2">
    <citation type="journal article" date="1997" name="Nature">
        <title>Crystal structure of the nucleosome core particle at 2.8 A resolution.</title>
        <authorList>
            <person name="Luger K."/>
            <person name="Mader A.W."/>
            <person name="Richmond R.K."/>
            <person name="Sargent D.F."/>
            <person name="Richmond T.J."/>
        </authorList>
    </citation>
    <scope>X-RAY CRYSTALLOGRAPHY (2.8 ANGSTROMS) OF NUCLEOSOME CORE COMPLEX</scope>
    <scope>SUBUNIT</scope>
</reference>
<reference key="3">
    <citation type="journal article" date="2003" name="J. Mol. Biol.">
        <title>Crystal structures of nucleosome core particles in complex with minor groove DNA-binding ligands.</title>
        <authorList>
            <person name="Suto R.K."/>
            <person name="Edayathumangalam R.S."/>
            <person name="White C.L."/>
            <person name="Melander C."/>
            <person name="Gottesfeld J.M."/>
            <person name="Dervan P.B."/>
            <person name="Luger K."/>
        </authorList>
    </citation>
    <scope>X-RAY CRYSTALLOGRAPHY (2.30 ANGSTROMS) OF NUCLEOSOME CORE COMPLEX</scope>
    <scope>SUBUNIT</scope>
</reference>
<accession>P02302</accession>
<protein>
    <recommendedName>
        <fullName>Histone H3.3C</fullName>
    </recommendedName>
</protein>
<proteinExistence type="evidence at protein level"/>
<evidence type="ECO:0000250" key="1">
    <source>
        <dbReference type="UniProtKB" id="P68431"/>
    </source>
</evidence>
<evidence type="ECO:0000250" key="2">
    <source>
        <dbReference type="UniProtKB" id="P68433"/>
    </source>
</evidence>
<evidence type="ECO:0000250" key="3">
    <source>
        <dbReference type="UniProtKB" id="P84243"/>
    </source>
</evidence>
<evidence type="ECO:0000250" key="4">
    <source>
        <dbReference type="UniProtKB" id="P84244"/>
    </source>
</evidence>
<evidence type="ECO:0000256" key="5">
    <source>
        <dbReference type="SAM" id="MobiDB-lite"/>
    </source>
</evidence>
<evidence type="ECO:0000269" key="6">
    <source>
    </source>
</evidence>
<evidence type="ECO:0000269" key="7">
    <source>
    </source>
</evidence>
<evidence type="ECO:0000305" key="8"/>
<evidence type="ECO:0007829" key="9">
    <source>
        <dbReference type="PDB" id="1AOI"/>
    </source>
</evidence>
<evidence type="ECO:0007829" key="10">
    <source>
        <dbReference type="PDB" id="1M19"/>
    </source>
</evidence>
<evidence type="ECO:0007829" key="11">
    <source>
        <dbReference type="PDB" id="1M1A"/>
    </source>
</evidence>
<name>H3C_XENLA</name>
<sequence>MARTKQTARKSTGGKAPRKQLVTKAAKKCAPATGGVKKPHRYRPGTVALREIRRYQKSTELLIRKLPFQRLVREIAQDFKTDLRFQRSAVMALQEASEAYLVALFEDTNLCAIHAKRVTIMPKDIQLARRIRGERA</sequence>
<dbReference type="EMBL" id="J00982">
    <property type="status" value="NOT_ANNOTATED_CDS"/>
    <property type="molecule type" value="Genomic_DNA"/>
</dbReference>
<dbReference type="EMBL" id="J00984">
    <property type="status" value="NOT_ANNOTATED_CDS"/>
    <property type="molecule type" value="Genomic_DNA"/>
</dbReference>
<dbReference type="PIR" id="A02634">
    <property type="entry name" value="HSXL32"/>
</dbReference>
<dbReference type="PDB" id="1AOI">
    <property type="method" value="X-ray"/>
    <property type="resolution" value="2.80 A"/>
    <property type="chains" value="A/E=21-136"/>
</dbReference>
<dbReference type="PDB" id="1M18">
    <property type="method" value="X-ray"/>
    <property type="resolution" value="2.45 A"/>
    <property type="chains" value="A/E=2-136"/>
</dbReference>
<dbReference type="PDB" id="1M19">
    <property type="method" value="X-ray"/>
    <property type="resolution" value="2.30 A"/>
    <property type="chains" value="A/E=2-136"/>
</dbReference>
<dbReference type="PDB" id="1M1A">
    <property type="method" value="X-ray"/>
    <property type="resolution" value="2.65 A"/>
    <property type="chains" value="A/E=2-136"/>
</dbReference>
<dbReference type="PDB" id="6FQ8">
    <property type="method" value="EM"/>
    <property type="resolution" value="4.80 A"/>
    <property type="chains" value="A/E=38-135"/>
</dbReference>
<dbReference type="PDB" id="6FTX">
    <property type="method" value="EM"/>
    <property type="resolution" value="4.50 A"/>
    <property type="chains" value="E=30-136"/>
</dbReference>
<dbReference type="PDB" id="6NZO">
    <property type="method" value="EM"/>
    <property type="resolution" value="3.80 A"/>
    <property type="chains" value="A/E=1-136"/>
</dbReference>
<dbReference type="PDB" id="6PX1">
    <property type="method" value="EM"/>
    <property type="resolution" value="3.30 A"/>
    <property type="chains" value="A/E=1-136"/>
</dbReference>
<dbReference type="PDB" id="6PX3">
    <property type="method" value="EM"/>
    <property type="resolution" value="4.10 A"/>
    <property type="chains" value="A/E=1-136"/>
</dbReference>
<dbReference type="PDB" id="6YN1">
    <property type="method" value="X-ray"/>
    <property type="resolution" value="2.35 A"/>
    <property type="chains" value="C/H/M/R/W/b/g/l=39-136"/>
</dbReference>
<dbReference type="PDB" id="7M1X">
    <property type="method" value="EM"/>
    <property type="resolution" value="3.70 A"/>
    <property type="chains" value="A/E=1-136"/>
</dbReference>
<dbReference type="PDB" id="8DU4">
    <property type="method" value="EM"/>
    <property type="resolution" value="3.55 A"/>
    <property type="chains" value="A/E=1-136"/>
</dbReference>
<dbReference type="PDB" id="8ETV">
    <property type="method" value="EM"/>
    <property type="resolution" value="3.16 A"/>
    <property type="chains" value="A=61-135"/>
</dbReference>
<dbReference type="PDB" id="8EU2">
    <property type="method" value="EM"/>
    <property type="resolution" value="2.93 A"/>
    <property type="chains" value="K/O=39-136"/>
</dbReference>
<dbReference type="PDB" id="8TOF">
    <property type="method" value="EM"/>
    <property type="resolution" value="2.80 A"/>
    <property type="chains" value="a/e=1-136"/>
</dbReference>
<dbReference type="PDB" id="8U5H">
    <property type="method" value="EM"/>
    <property type="resolution" value="3.23 A"/>
    <property type="chains" value="I/O=1-136"/>
</dbReference>
<dbReference type="PDBsum" id="1AOI"/>
<dbReference type="PDBsum" id="1M18"/>
<dbReference type="PDBsum" id="1M19"/>
<dbReference type="PDBsum" id="1M1A"/>
<dbReference type="PDBsum" id="6FQ8"/>
<dbReference type="PDBsum" id="6FTX"/>
<dbReference type="PDBsum" id="6NZO"/>
<dbReference type="PDBsum" id="6PX1"/>
<dbReference type="PDBsum" id="6PX3"/>
<dbReference type="PDBsum" id="6YN1"/>
<dbReference type="PDBsum" id="7M1X"/>
<dbReference type="PDBsum" id="8DU4"/>
<dbReference type="PDBsum" id="8ETV"/>
<dbReference type="PDBsum" id="8EU2"/>
<dbReference type="PDBsum" id="8TOF"/>
<dbReference type="PDBsum" id="8U5H"/>
<dbReference type="EMDB" id="EMD-11912"/>
<dbReference type="EMDB" id="EMD-13070"/>
<dbReference type="EMDB" id="EMD-22694"/>
<dbReference type="EMDB" id="EMD-22695"/>
<dbReference type="EMDB" id="EMD-23103"/>
<dbReference type="EMDB" id="EMD-23630"/>
<dbReference type="EMDB" id="EMD-23631"/>
<dbReference type="EMDB" id="EMD-23632"/>
<dbReference type="EMDB" id="EMD-23823"/>
<dbReference type="EMDB" id="EMD-23824"/>
<dbReference type="EMDB" id="EMD-41922"/>
<dbReference type="EMDB" id="EMD-42773"/>
<dbReference type="EMDB" id="EMD-4299"/>
<dbReference type="EMDB" id="EMD-4318"/>
<dbReference type="EMDB" id="EMD-4712"/>
<dbReference type="EMDB" id="EMD-8140"/>
<dbReference type="SMR" id="P02302"/>
<dbReference type="DIP" id="DIP-39145N"/>
<dbReference type="IntAct" id="P02302">
    <property type="interactions" value="1"/>
</dbReference>
<dbReference type="EvolutionaryTrace" id="P02302"/>
<dbReference type="Proteomes" id="UP000186698">
    <property type="component" value="Unplaced"/>
</dbReference>
<dbReference type="GO" id="GO:0000786">
    <property type="term" value="C:nucleosome"/>
    <property type="evidence" value="ECO:0007669"/>
    <property type="project" value="UniProtKB-KW"/>
</dbReference>
<dbReference type="GO" id="GO:0005634">
    <property type="term" value="C:nucleus"/>
    <property type="evidence" value="ECO:0000318"/>
    <property type="project" value="GO_Central"/>
</dbReference>
<dbReference type="GO" id="GO:0003677">
    <property type="term" value="F:DNA binding"/>
    <property type="evidence" value="ECO:0007669"/>
    <property type="project" value="UniProtKB-KW"/>
</dbReference>
<dbReference type="GO" id="GO:0046982">
    <property type="term" value="F:protein heterodimerization activity"/>
    <property type="evidence" value="ECO:0007669"/>
    <property type="project" value="InterPro"/>
</dbReference>
<dbReference type="GO" id="GO:0030527">
    <property type="term" value="F:structural constituent of chromatin"/>
    <property type="evidence" value="ECO:0007669"/>
    <property type="project" value="InterPro"/>
</dbReference>
<dbReference type="CDD" id="cd22911">
    <property type="entry name" value="HFD_H3"/>
    <property type="match status" value="1"/>
</dbReference>
<dbReference type="FunFam" id="1.10.20.10:FF:000078">
    <property type="entry name" value="Histone H3"/>
    <property type="match status" value="1"/>
</dbReference>
<dbReference type="FunFam" id="1.10.20.10:FF:000044">
    <property type="entry name" value="Histone H3.3"/>
    <property type="match status" value="1"/>
</dbReference>
<dbReference type="Gene3D" id="1.10.20.10">
    <property type="entry name" value="Histone, subunit A"/>
    <property type="match status" value="1"/>
</dbReference>
<dbReference type="InterPro" id="IPR009072">
    <property type="entry name" value="Histone-fold"/>
</dbReference>
<dbReference type="InterPro" id="IPR007125">
    <property type="entry name" value="Histone_H2A/H2B/H3"/>
</dbReference>
<dbReference type="InterPro" id="IPR000164">
    <property type="entry name" value="Histone_H3/CENP-A"/>
</dbReference>
<dbReference type="PANTHER" id="PTHR11426">
    <property type="entry name" value="HISTONE H3"/>
    <property type="match status" value="1"/>
</dbReference>
<dbReference type="Pfam" id="PF00125">
    <property type="entry name" value="Histone"/>
    <property type="match status" value="1"/>
</dbReference>
<dbReference type="PRINTS" id="PR00622">
    <property type="entry name" value="HISTONEH3"/>
</dbReference>
<dbReference type="SMART" id="SM00428">
    <property type="entry name" value="H3"/>
    <property type="match status" value="1"/>
</dbReference>
<dbReference type="SUPFAM" id="SSF47113">
    <property type="entry name" value="Histone-fold"/>
    <property type="match status" value="1"/>
</dbReference>
<dbReference type="PROSITE" id="PS00322">
    <property type="entry name" value="HISTONE_H3_1"/>
    <property type="match status" value="1"/>
</dbReference>
<dbReference type="PROSITE" id="PS00959">
    <property type="entry name" value="HISTONE_H3_2"/>
    <property type="match status" value="1"/>
</dbReference>